<gene>
    <name type="primary">ybgE</name>
    <name type="ordered locus">b0735</name>
    <name type="ordered locus">JW0725</name>
</gene>
<keyword id="KW-1185">Reference proteome</keyword>
<proteinExistence type="predicted"/>
<feature type="chain" id="PRO_0000168702" description="Uncharacterized protein YbgE">
    <location>
        <begin position="1"/>
        <end position="97"/>
    </location>
</feature>
<reference key="1">
    <citation type="submission" date="1995-07" db="EMBL/GenBank/DDBJ databases">
        <authorList>
            <person name="Kim K."/>
            <person name="Allen E."/>
            <person name="Araujo R."/>
            <person name="Aparicio A.M."/>
            <person name="Botstein D."/>
            <person name="Cherry M."/>
            <person name="Chung E."/>
            <person name="Dietrich F."/>
            <person name="Duncan M."/>
            <person name="Federspiel N."/>
            <person name="Kalman S."/>
            <person name="Komp C."/>
            <person name="Lashkari D."/>
            <person name="Lew H."/>
            <person name="Lin D."/>
            <person name="Namath A."/>
            <person name="Oefner P."/>
            <person name="Davis R."/>
        </authorList>
    </citation>
    <scope>NUCLEOTIDE SEQUENCE [GENOMIC DNA]</scope>
</reference>
<reference key="2">
    <citation type="journal article" date="1996" name="DNA Res.">
        <title>A 718-kb DNA sequence of the Escherichia coli K-12 genome corresponding to the 12.7-28.0 min region on the linkage map.</title>
        <authorList>
            <person name="Oshima T."/>
            <person name="Aiba H."/>
            <person name="Baba T."/>
            <person name="Fujita K."/>
            <person name="Hayashi K."/>
            <person name="Honjo A."/>
            <person name="Ikemoto K."/>
            <person name="Inada T."/>
            <person name="Itoh T."/>
            <person name="Kajihara M."/>
            <person name="Kanai K."/>
            <person name="Kashimoto K."/>
            <person name="Kimura S."/>
            <person name="Kitagawa M."/>
            <person name="Makino K."/>
            <person name="Masuda S."/>
            <person name="Miki T."/>
            <person name="Mizobuchi K."/>
            <person name="Mori H."/>
            <person name="Motomura K."/>
            <person name="Nakamura Y."/>
            <person name="Nashimoto H."/>
            <person name="Nishio Y."/>
            <person name="Saito N."/>
            <person name="Sampei G."/>
            <person name="Seki Y."/>
            <person name="Tagami H."/>
            <person name="Takemoto K."/>
            <person name="Wada C."/>
            <person name="Yamamoto Y."/>
            <person name="Yano M."/>
            <person name="Horiuchi T."/>
        </authorList>
    </citation>
    <scope>NUCLEOTIDE SEQUENCE [LARGE SCALE GENOMIC DNA]</scope>
    <source>
        <strain>K12 / W3110 / ATCC 27325 / DSM 5911</strain>
    </source>
</reference>
<reference key="3">
    <citation type="journal article" date="1997" name="Science">
        <title>The complete genome sequence of Escherichia coli K-12.</title>
        <authorList>
            <person name="Blattner F.R."/>
            <person name="Plunkett G. III"/>
            <person name="Bloch C.A."/>
            <person name="Perna N.T."/>
            <person name="Burland V."/>
            <person name="Riley M."/>
            <person name="Collado-Vides J."/>
            <person name="Glasner J.D."/>
            <person name="Rode C.K."/>
            <person name="Mayhew G.F."/>
            <person name="Gregor J."/>
            <person name="Davis N.W."/>
            <person name="Kirkpatrick H.A."/>
            <person name="Goeden M.A."/>
            <person name="Rose D.J."/>
            <person name="Mau B."/>
            <person name="Shao Y."/>
        </authorList>
    </citation>
    <scope>NUCLEOTIDE SEQUENCE [LARGE SCALE GENOMIC DNA]</scope>
    <source>
        <strain>K12 / MG1655 / ATCC 47076</strain>
    </source>
</reference>
<reference key="4">
    <citation type="journal article" date="2006" name="Mol. Syst. Biol.">
        <title>Highly accurate genome sequences of Escherichia coli K-12 strains MG1655 and W3110.</title>
        <authorList>
            <person name="Hayashi K."/>
            <person name="Morooka N."/>
            <person name="Yamamoto Y."/>
            <person name="Fujita K."/>
            <person name="Isono K."/>
            <person name="Choi S."/>
            <person name="Ohtsubo E."/>
            <person name="Baba T."/>
            <person name="Wanner B.L."/>
            <person name="Mori H."/>
            <person name="Horiuchi T."/>
        </authorList>
    </citation>
    <scope>NUCLEOTIDE SEQUENCE [LARGE SCALE GENOMIC DNA]</scope>
    <source>
        <strain>K12 / W3110 / ATCC 27325 / DSM 5911</strain>
    </source>
</reference>
<reference key="5">
    <citation type="journal article" date="1988" name="J. Biol. Chem.">
        <title>The nucleotide sequence of the cyd locus encoding the two subunits of the cytochrome d terminal oxidase complex of Escherichia coli.</title>
        <authorList>
            <person name="Green G.N."/>
            <person name="Fang H."/>
            <person name="Lin R.-J."/>
            <person name="Newton G."/>
            <person name="Mather M."/>
            <person name="Georgiou C.D."/>
            <person name="Gennis R.B."/>
        </authorList>
    </citation>
    <scope>NUCLEOTIDE SEQUENCE [GENOMIC DNA] OF 1-6</scope>
</reference>
<reference key="6">
    <citation type="journal article" date="1994" name="Nucleic Acids Res.">
        <title>Intrinsic and extrinsic approaches for detecting genes in a bacterial genome.</title>
        <authorList>
            <person name="Borodovsky M."/>
            <person name="Rudd K.E."/>
            <person name="Koonin E.V."/>
        </authorList>
    </citation>
    <scope>IDENTIFICATION</scope>
</reference>
<reference key="7">
    <citation type="journal article" date="1997" name="J. Bacteriol.">
        <title>Characterization of the tol-pal and cyd region of Escherichia coli K-12: transcript analysis and identification of two new proteins encoded by the cyd operon.</title>
        <authorList>
            <person name="Muller M.M."/>
            <person name="Webster R.E."/>
        </authorList>
    </citation>
    <scope>IDENTIFICATION</scope>
    <source>
        <strain>K12 / MG1655 / ATCC 47076</strain>
    </source>
</reference>
<reference key="8">
    <citation type="journal article" date="2013" name="J. Bacteriol.">
        <title>The Escherichia coli CydX protein is a member of the CydAB cytochrome bd oxidase complex and is required for cytochrome bd oxidase activity.</title>
        <authorList>
            <person name="Vanorsdel C.E."/>
            <person name="Bhatt S."/>
            <person name="Allen R.J."/>
            <person name="Brenner E.P."/>
            <person name="Hobson J.J."/>
            <person name="Jamil A."/>
            <person name="Haynes B.M."/>
            <person name="Genson A.M."/>
            <person name="Hemm M.R."/>
        </authorList>
    </citation>
    <scope>DISRUPTION PHENOTYPE</scope>
    <source>
        <strain>K12 / MG1655 / ATCC 47076</strain>
    </source>
</reference>
<sequence length="97" mass="10932">MSKIIATLYAVMDKRPLRALSFVMALLLAGCMFWDPSRFAAKTSELEIWHGLLLMWAVCAGVIHGVGFRPQKVLWQGIFCPLLADIVLIVGLIFFFF</sequence>
<protein>
    <recommendedName>
        <fullName>Uncharacterized protein YbgE</fullName>
    </recommendedName>
</protein>
<evidence type="ECO:0000269" key="1">
    <source>
    </source>
</evidence>
<dbReference type="EMBL" id="U30934">
    <property type="status" value="NOT_ANNOTATED_CDS"/>
    <property type="molecule type" value="Genomic_DNA"/>
</dbReference>
<dbReference type="EMBL" id="U00096">
    <property type="protein sequence ID" value="AAC73829.1"/>
    <property type="molecule type" value="Genomic_DNA"/>
</dbReference>
<dbReference type="EMBL" id="AP009048">
    <property type="protein sequence ID" value="BAA35401.1"/>
    <property type="molecule type" value="Genomic_DNA"/>
</dbReference>
<dbReference type="EMBL" id="J03939">
    <property type="status" value="NOT_ANNOTATED_CDS"/>
    <property type="molecule type" value="Unassigned_DNA"/>
</dbReference>
<dbReference type="PIR" id="F64809">
    <property type="entry name" value="F64809"/>
</dbReference>
<dbReference type="RefSeq" id="NP_415263.1">
    <property type="nucleotide sequence ID" value="NC_000913.3"/>
</dbReference>
<dbReference type="RefSeq" id="WP_000034602.1">
    <property type="nucleotide sequence ID" value="NZ_STEB01000035.1"/>
</dbReference>
<dbReference type="SMR" id="P0AAV0"/>
<dbReference type="BioGRID" id="4259451">
    <property type="interactions" value="9"/>
</dbReference>
<dbReference type="FunCoup" id="P0AAV0">
    <property type="interactions" value="71"/>
</dbReference>
<dbReference type="IntAct" id="P0AAV0">
    <property type="interactions" value="2"/>
</dbReference>
<dbReference type="STRING" id="511145.b0735"/>
<dbReference type="TCDB" id="8.A.79.1.1">
    <property type="family name" value="the 3 tms cyd operon protein, cydx (cydx) family"/>
</dbReference>
<dbReference type="PaxDb" id="511145-b0735"/>
<dbReference type="EnsemblBacteria" id="AAC73829">
    <property type="protein sequence ID" value="AAC73829"/>
    <property type="gene ID" value="b0735"/>
</dbReference>
<dbReference type="GeneID" id="93776749"/>
<dbReference type="GeneID" id="945326"/>
<dbReference type="KEGG" id="ecj:JW0725"/>
<dbReference type="KEGG" id="eco:b0735"/>
<dbReference type="KEGG" id="ecoc:C3026_03690"/>
<dbReference type="PATRIC" id="fig|511145.12.peg.767"/>
<dbReference type="EchoBASE" id="EB2296"/>
<dbReference type="eggNOG" id="COG3790">
    <property type="taxonomic scope" value="Bacteria"/>
</dbReference>
<dbReference type="HOGENOM" id="CLU_156555_2_0_6"/>
<dbReference type="InParanoid" id="P0AAV0"/>
<dbReference type="OMA" id="GCVFWDP"/>
<dbReference type="OrthoDB" id="5298003at2"/>
<dbReference type="PhylomeDB" id="P0AAV0"/>
<dbReference type="BioCyc" id="EcoCyc:EG12395-MONOMER"/>
<dbReference type="PRO" id="PR:P0AAV0"/>
<dbReference type="Proteomes" id="UP000000625">
    <property type="component" value="Chromosome"/>
</dbReference>
<dbReference type="InterPro" id="IPR011846">
    <property type="entry name" value="Cyd_oper_YbgE"/>
</dbReference>
<dbReference type="NCBIfam" id="TIGR02112">
    <property type="entry name" value="cyd_oper_ybgE"/>
    <property type="match status" value="1"/>
</dbReference>
<dbReference type="NCBIfam" id="NF007881">
    <property type="entry name" value="PRK10588.1"/>
    <property type="match status" value="1"/>
</dbReference>
<dbReference type="Pfam" id="PF09600">
    <property type="entry name" value="Cyd_oper_YbgE"/>
    <property type="match status" value="1"/>
</dbReference>
<dbReference type="PROSITE" id="PS51257">
    <property type="entry name" value="PROKAR_LIPOPROTEIN"/>
    <property type="match status" value="1"/>
</dbReference>
<accession>P0AAV0</accession>
<accession>P37343</accession>
<accession>P75755</accession>
<comment type="disruption phenotype">
    <text evidence="1">Not essential, no change in sensitivity to reductant (beta-mercaptoethanol), may not play a role in cytochrome bd-I oxidase.</text>
</comment>
<organism>
    <name type="scientific">Escherichia coli (strain K12)</name>
    <dbReference type="NCBI Taxonomy" id="83333"/>
    <lineage>
        <taxon>Bacteria</taxon>
        <taxon>Pseudomonadati</taxon>
        <taxon>Pseudomonadota</taxon>
        <taxon>Gammaproteobacteria</taxon>
        <taxon>Enterobacterales</taxon>
        <taxon>Enterobacteriaceae</taxon>
        <taxon>Escherichia</taxon>
    </lineage>
</organism>
<name>YBGE_ECOLI</name>